<proteinExistence type="evidence at transcript level"/>
<dbReference type="EC" id="3.1.27.-"/>
<dbReference type="EMBL" id="CR857385">
    <property type="protein sequence ID" value="CAH89679.1"/>
    <property type="status" value="ALT_SEQ"/>
    <property type="molecule type" value="mRNA"/>
</dbReference>
<dbReference type="EMBL" id="CR926091">
    <property type="protein sequence ID" value="CAI29717.1"/>
    <property type="molecule type" value="mRNA"/>
</dbReference>
<dbReference type="EMBL" id="CR926113">
    <property type="protein sequence ID" value="CAI29738.1"/>
    <property type="molecule type" value="mRNA"/>
</dbReference>
<dbReference type="RefSeq" id="NP_001124760.2">
    <property type="nucleotide sequence ID" value="NM_001131288.2"/>
</dbReference>
<dbReference type="RefSeq" id="NP_001128922.1">
    <property type="nucleotide sequence ID" value="NM_001135450.1"/>
</dbReference>
<dbReference type="SMR" id="Q5NVE6"/>
<dbReference type="FunCoup" id="Q5NVE6">
    <property type="interactions" value="2675"/>
</dbReference>
<dbReference type="STRING" id="9601.ENSPPYP00000002328"/>
<dbReference type="Ensembl" id="ENSPPYT00000002399.2">
    <property type="protein sequence ID" value="ENSPPYP00000002328.2"/>
    <property type="gene ID" value="ENSPPYG00000002013.2"/>
</dbReference>
<dbReference type="GeneID" id="100171611"/>
<dbReference type="KEGG" id="pon:100171611"/>
<dbReference type="CTD" id="54973"/>
<dbReference type="eggNOG" id="KOG1136">
    <property type="taxonomic scope" value="Eukaryota"/>
</dbReference>
<dbReference type="GeneTree" id="ENSGT00940000157644"/>
<dbReference type="InParanoid" id="Q5NVE6"/>
<dbReference type="OrthoDB" id="10249535at2759"/>
<dbReference type="Proteomes" id="UP000001595">
    <property type="component" value="Chromosome 1"/>
</dbReference>
<dbReference type="GO" id="GO:0005737">
    <property type="term" value="C:cytoplasm"/>
    <property type="evidence" value="ECO:0000250"/>
    <property type="project" value="UniProtKB"/>
</dbReference>
<dbReference type="GO" id="GO:0160232">
    <property type="term" value="C:INTAC complex"/>
    <property type="evidence" value="ECO:0000250"/>
    <property type="project" value="UniProtKB"/>
</dbReference>
<dbReference type="GO" id="GO:0032039">
    <property type="term" value="C:integrator complex"/>
    <property type="evidence" value="ECO:0000250"/>
    <property type="project" value="UniProtKB"/>
</dbReference>
<dbReference type="GO" id="GO:0005634">
    <property type="term" value="C:nucleus"/>
    <property type="evidence" value="ECO:0000250"/>
    <property type="project" value="UniProtKB"/>
</dbReference>
<dbReference type="GO" id="GO:0004521">
    <property type="term" value="F:RNA endonuclease activity"/>
    <property type="evidence" value="ECO:0000250"/>
    <property type="project" value="UniProtKB"/>
</dbReference>
<dbReference type="GO" id="GO:0160240">
    <property type="term" value="P:RNA polymerase II transcription initiation surveillance"/>
    <property type="evidence" value="ECO:0000250"/>
    <property type="project" value="UniProtKB"/>
</dbReference>
<dbReference type="GO" id="GO:0034472">
    <property type="term" value="P:snRNA 3'-end processing"/>
    <property type="evidence" value="ECO:0000250"/>
    <property type="project" value="UniProtKB"/>
</dbReference>
<dbReference type="CDD" id="cd16291">
    <property type="entry name" value="INTS11-like_MBL-fold"/>
    <property type="match status" value="1"/>
</dbReference>
<dbReference type="FunFam" id="3.40.50.10890:FF:000002">
    <property type="entry name" value="Integrator complex subunit 11"/>
    <property type="match status" value="1"/>
</dbReference>
<dbReference type="FunFam" id="3.60.15.10:FF:000003">
    <property type="entry name" value="Integrator complex subunit 11"/>
    <property type="match status" value="1"/>
</dbReference>
<dbReference type="Gene3D" id="3.40.50.10890">
    <property type="match status" value="1"/>
</dbReference>
<dbReference type="Gene3D" id="3.60.15.10">
    <property type="entry name" value="Ribonuclease Z/Hydroxyacylglutathione hydrolase-like"/>
    <property type="match status" value="1"/>
</dbReference>
<dbReference type="InterPro" id="IPR022712">
    <property type="entry name" value="Beta_Casp"/>
</dbReference>
<dbReference type="InterPro" id="IPR041897">
    <property type="entry name" value="INTS11-like_MBL-fold"/>
</dbReference>
<dbReference type="InterPro" id="IPR048662">
    <property type="entry name" value="IntS11_C"/>
</dbReference>
<dbReference type="InterPro" id="IPR050698">
    <property type="entry name" value="MBL"/>
</dbReference>
<dbReference type="InterPro" id="IPR001279">
    <property type="entry name" value="Metallo-B-lactamas"/>
</dbReference>
<dbReference type="InterPro" id="IPR036866">
    <property type="entry name" value="RibonucZ/Hydroxyglut_hydro"/>
</dbReference>
<dbReference type="InterPro" id="IPR011108">
    <property type="entry name" value="RMMBL"/>
</dbReference>
<dbReference type="PANTHER" id="PTHR11203">
    <property type="entry name" value="CLEAVAGE AND POLYADENYLATION SPECIFICITY FACTOR FAMILY MEMBER"/>
    <property type="match status" value="1"/>
</dbReference>
<dbReference type="PANTHER" id="PTHR11203:SF37">
    <property type="entry name" value="INTEGRATOR COMPLEX SUBUNIT 11"/>
    <property type="match status" value="1"/>
</dbReference>
<dbReference type="Pfam" id="PF10996">
    <property type="entry name" value="Beta-Casp"/>
    <property type="match status" value="1"/>
</dbReference>
<dbReference type="Pfam" id="PF21386">
    <property type="entry name" value="IntS11_C"/>
    <property type="match status" value="1"/>
</dbReference>
<dbReference type="Pfam" id="PF16661">
    <property type="entry name" value="Lactamase_B_6"/>
    <property type="match status" value="1"/>
</dbReference>
<dbReference type="Pfam" id="PF07521">
    <property type="entry name" value="RMMBL"/>
    <property type="match status" value="1"/>
</dbReference>
<dbReference type="SMART" id="SM01027">
    <property type="entry name" value="Beta-Casp"/>
    <property type="match status" value="1"/>
</dbReference>
<dbReference type="SMART" id="SM00849">
    <property type="entry name" value="Lactamase_B"/>
    <property type="match status" value="1"/>
</dbReference>
<dbReference type="SUPFAM" id="SSF56281">
    <property type="entry name" value="Metallo-hydrolase/oxidoreductase"/>
    <property type="match status" value="1"/>
</dbReference>
<keyword id="KW-0963">Cytoplasm</keyword>
<keyword id="KW-0378">Hydrolase</keyword>
<keyword id="KW-1017">Isopeptide bond</keyword>
<keyword id="KW-0479">Metal-binding</keyword>
<keyword id="KW-0539">Nucleus</keyword>
<keyword id="KW-1185">Reference proteome</keyword>
<keyword id="KW-0832">Ubl conjugation</keyword>
<keyword id="KW-0862">Zinc</keyword>
<sequence>MPEIRVTPLGAGQDVGRSCILVSIAGKNVMLDCGMHMGFNDDRRFPDFSYITQNGRLTDFLDCVIISHFHLDHCGALPYFSEMVGYDGPIYMTHPTQAICPILLEDYRKIAVDKKGEANFFTSQMIKDCMKKVVAVHLHQTVQVDDELEIKAYYAGHVLGAAMFQIKVGSESVVYTGDYNMTPDRHLGAAWIDKCRPNLLITESTYATTIRDSKRCRERDFLKKVHETVERGGKVLIPVFALGRAQELCILLETFWERMNLKVPIYFSTGLTEKANHYYKLFIPWTNQKIRKTFVQRNMFEFKHIKAFDRAFADNPGPMVVFATPGMLHAGQSLQIFRKWAGNEKNMVIMPGYCVQGTVGHKILSGQRKLEMEGRQVLEVKMQVEYMSFSAHADAKGIMQLVGQAEPESVLLVHGEAKKMEFLKQKIEQELRVSCYMPANGETVTLPTSPSIPVGISLGLLKREMAQGLLPEAKKPRLLHGTLIMKDSNFRLVSSEQALKELGLAEHQLRFTCRVHLHDTRKEQETALRVYSHLKSILKDHCVQHLPDGSVTVESILIQAAAPSEDPGTKVLLVSWTYQDEELGSFLTSLLKKGLPQAPS</sequence>
<organism>
    <name type="scientific">Pongo abelii</name>
    <name type="common">Sumatran orangutan</name>
    <name type="synonym">Pongo pygmaeus abelii</name>
    <dbReference type="NCBI Taxonomy" id="9601"/>
    <lineage>
        <taxon>Eukaryota</taxon>
        <taxon>Metazoa</taxon>
        <taxon>Chordata</taxon>
        <taxon>Craniata</taxon>
        <taxon>Vertebrata</taxon>
        <taxon>Euteleostomi</taxon>
        <taxon>Mammalia</taxon>
        <taxon>Eutheria</taxon>
        <taxon>Euarchontoglires</taxon>
        <taxon>Primates</taxon>
        <taxon>Haplorrhini</taxon>
        <taxon>Catarrhini</taxon>
        <taxon>Hominidae</taxon>
        <taxon>Pongo</taxon>
    </lineage>
</organism>
<comment type="function">
    <text evidence="1">RNA endonuclease component of the integrator complex, a multiprotein complex that terminates RNA polymerase II (Pol II) transcription in the promoter-proximal region of genes. The integrator complex provides a quality checkpoint during transcription elongation by driving premature transcription termination of transcripts that are unfavorably configured for transcriptional elongation: the complex terminates transcription by (1) catalyzing dephosphorylation of the C-terminal domain (CTD) of Pol II subunit POLR2A/RPB1 and SUPT5H/SPT5, (2) degrading the exiting nascent RNA transcript via endonuclease activity and (3) promoting the release of Pol II from bound DNA. The integrator complex is also involved in terminating the synthesis of non-coding Pol II transcripts, such as enhancer RNAs (eRNAs), small nuclear RNAs (snRNAs), telomerase RNAs and long non-coding RNAs (lncRNAs). Within the integrator complex, INTS11 constitutes the RNA endonuclease subunit that degrades exiting nascent RNA transcripts. Mediates recruitment of cytoplasmic dynein to the nuclear envelope, probably as component of the integrator complex.</text>
</comment>
<comment type="cofactor">
    <cofactor evidence="1">
        <name>Zn(2+)</name>
        <dbReference type="ChEBI" id="CHEBI:29105"/>
    </cofactor>
</comment>
<comment type="activity regulation">
    <text evidence="1">The RNA endonuclease activity is inhibited by BRAT1 that forms hyrogen bond and hydrophobic interactions with the active site.</text>
</comment>
<comment type="subunit">
    <text evidence="1">Component of the Integrator complex, composed of core subunits INTS1, INTS2, INTS3, INTS4, INTS5, INTS6, INTS7, INTS8, INTS9/RC74, INTS10, INTS11/CPSF3L, INTS12, INTS13, INTS14 and INTS15. The core complex associates with protein phosphatase 2A subunits PPP2CA and PPP2R1A, to form the Integrator-PP2A (INTAC) complex. INTS11 is part of the RNA endonuclease subcomplex, composed of INTS4, INTS9, INTS11 and inositol hexakisphosphate (InsP6). Interacts with WDR73; interaction is required for the assembly of the RNA endonuclease subcomplex in the cytoplasm. Interacts with BRAT1; interaction is required for the assembly of the RNA endonuclease subcomplex and inhibits the endonuclease activity of INTS11 before formation of mature integrator complex.</text>
</comment>
<comment type="subcellular location">
    <subcellularLocation>
        <location evidence="1">Nucleus</location>
    </subcellularLocation>
    <subcellularLocation>
        <location evidence="1">Cytoplasm</location>
    </subcellularLocation>
</comment>
<comment type="PTM">
    <text evidence="1">Sumoylated; sumoylation regulates its subcellular location and is required for integrator complex integrity.</text>
</comment>
<comment type="similarity">
    <text evidence="2">Belongs to the metallo-beta-lactamase superfamily. RNA-metabolizing metallo-beta-lactamase-like family. INTS11 subfamily.</text>
</comment>
<comment type="sequence caution" evidence="2">
    <conflict type="erroneous termination">
        <sequence resource="EMBL-CDS" id="CAH89679"/>
    </conflict>
    <text>Extended C-terminus.</text>
</comment>
<evidence type="ECO:0000250" key="1">
    <source>
        <dbReference type="UniProtKB" id="Q5TA45"/>
    </source>
</evidence>
<evidence type="ECO:0000305" key="2"/>
<reference key="1">
    <citation type="submission" date="2004-11" db="EMBL/GenBank/DDBJ databases">
        <authorList>
            <consortium name="The German cDNA consortium"/>
        </authorList>
    </citation>
    <scope>NUCLEOTIDE SEQUENCE [LARGE SCALE MRNA]</scope>
    <source>
        <tissue>Brain cortex</tissue>
        <tissue>Kidney</tissue>
    </source>
</reference>
<accession>Q5NVE6</accession>
<accession>Q5NVC5</accession>
<accession>Q5REX8</accession>
<gene>
    <name type="primary">INTS11</name>
    <name type="synonym">CPSF3L</name>
</gene>
<name>INT11_PONAB</name>
<protein>
    <recommendedName>
        <fullName>Integrator complex subunit 11</fullName>
        <shortName>Int11</shortName>
        <ecNumber>3.1.27.-</ecNumber>
    </recommendedName>
    <alternativeName>
        <fullName>Cleavage and polyadenylation-specific factor 3-like protein</fullName>
        <shortName>CPSF3-like protein</shortName>
    </alternativeName>
</protein>
<feature type="chain" id="PRO_0000259565" description="Integrator complex subunit 11">
    <location>
        <begin position="1"/>
        <end position="600"/>
    </location>
</feature>
<feature type="short sequence motif" description="HXHXDH motif">
    <location>
        <begin position="68"/>
        <end position="73"/>
    </location>
</feature>
<feature type="short sequence motif" description="Nuclear localization signal" evidence="1">
    <location>
        <begin position="469"/>
        <end position="479"/>
    </location>
</feature>
<feature type="active site" evidence="1">
    <location>
        <position position="203"/>
    </location>
</feature>
<feature type="binding site" evidence="1">
    <location>
        <position position="68"/>
    </location>
    <ligand>
        <name>Zn(2+)</name>
        <dbReference type="ChEBI" id="CHEBI:29105"/>
        <label>1</label>
    </ligand>
</feature>
<feature type="binding site" evidence="1">
    <location>
        <position position="70"/>
    </location>
    <ligand>
        <name>Zn(2+)</name>
        <dbReference type="ChEBI" id="CHEBI:29105"/>
        <label>1</label>
    </ligand>
</feature>
<feature type="binding site" evidence="1">
    <location>
        <position position="72"/>
    </location>
    <ligand>
        <name>Zn(2+)</name>
        <dbReference type="ChEBI" id="CHEBI:29105"/>
        <label>2</label>
    </ligand>
</feature>
<feature type="binding site" evidence="1">
    <location>
        <position position="73"/>
    </location>
    <ligand>
        <name>Zn(2+)</name>
        <dbReference type="ChEBI" id="CHEBI:29105"/>
        <label>2</label>
    </ligand>
</feature>
<feature type="binding site" evidence="1">
    <location>
        <position position="157"/>
    </location>
    <ligand>
        <name>Zn(2+)</name>
        <dbReference type="ChEBI" id="CHEBI:29105"/>
        <label>1</label>
    </ligand>
</feature>
<feature type="binding site" evidence="1">
    <location>
        <position position="178"/>
    </location>
    <ligand>
        <name>Zn(2+)</name>
        <dbReference type="ChEBI" id="CHEBI:29105"/>
        <label>1</label>
    </ligand>
</feature>
<feature type="binding site" evidence="1">
    <location>
        <position position="178"/>
    </location>
    <ligand>
        <name>Zn(2+)</name>
        <dbReference type="ChEBI" id="CHEBI:29105"/>
        <label>2</label>
    </ligand>
</feature>
<feature type="binding site" evidence="1">
    <location>
        <position position="414"/>
    </location>
    <ligand>
        <name>Zn(2+)</name>
        <dbReference type="ChEBI" id="CHEBI:29105"/>
        <label>2</label>
    </ligand>
</feature>
<feature type="cross-link" description="Glycyl lysine isopeptide (Lys-Gly) (interchain with G-Cter in SUMO)" evidence="1">
    <location>
        <position position="381"/>
    </location>
</feature>
<feature type="cross-link" description="Glycyl lysine isopeptide (Lys-Gly) (interchain with G-Cter in SUMO)" evidence="1">
    <location>
        <position position="462"/>
    </location>
</feature>
<feature type="cross-link" description="Glycyl lysine isopeptide (Lys-Gly) (interchain with G-Cter in SUMO)" evidence="1">
    <location>
        <position position="475"/>
    </location>
</feature>
<feature type="sequence conflict" description="In Ref. 1; CAI29738." evidence="2" ref="1">
    <original>M</original>
    <variation>V</variation>
    <location>
        <position position="92"/>
    </location>
</feature>
<feature type="sequence conflict" description="In Ref. 1; CAI29738." evidence="2" ref="1">
    <original>E</original>
    <variation>G</variation>
    <location>
        <position position="203"/>
    </location>
</feature>
<feature type="sequence conflict" description="In Ref. 1; CAI29717." evidence="2" ref="1">
    <original>F</original>
    <variation>S</variation>
    <location>
        <position position="294"/>
    </location>
</feature>
<feature type="sequence conflict" description="In Ref. 1; CAH89679." evidence="2" ref="1">
    <original>A</original>
    <variation>T</variation>
    <location>
        <position position="313"/>
    </location>
</feature>
<feature type="sequence conflict" description="In Ref. 1; CAH89679." evidence="2" ref="1">
    <original>L</original>
    <variation>Q</variation>
    <location>
        <position position="423"/>
    </location>
</feature>